<accession>Q65223</accession>
<evidence type="ECO:0000250" key="1">
    <source>
        <dbReference type="UniProtKB" id="Q89424"/>
    </source>
</evidence>
<evidence type="ECO:0000255" key="2"/>
<evidence type="ECO:0000305" key="3"/>
<name>P17_ASFM2</name>
<comment type="function">
    <text evidence="1">Together with the penton and the other minor capsid proteins (M1249L, p49), forms a complicated network immediately below the outer capsid shell, stabilizing the whole capsid. Three copies of p17 encircle each p72 capsomer in the inner capsid shell, anchoring p72 capsomers on the inner membrane. Required for the assembly of the capsid and icosahedral morphogenesis. Additionally, inhibits the host cGAS-STING pathway through its interaction with STING1 and subsequent interference of the recruitment of downstream components TBK1 and IKBKE.</text>
</comment>
<comment type="subunit">
    <text evidence="1">Interacts with the minor capsid protein M1249L and with the hexon capsid protein p72 capsomers; these interactions form a rigid zipper structure that stabilizes the capsomers. Interacts with host STING1.</text>
</comment>
<comment type="subcellular location">
    <subcellularLocation>
        <location evidence="1">Virion membrane</location>
        <topology evidence="2">Single-pass membrane protein</topology>
    </subcellularLocation>
    <subcellularLocation>
        <location evidence="1">Host endoplasmic reticulum membrane</location>
        <topology evidence="2">Single-pass membrane protein</topology>
    </subcellularLocation>
    <text>Found in the inner envelope of the virus.</text>
</comment>
<comment type="induction">
    <text evidence="3">Expressed in the late phase of the viral replicative cycle.</text>
</comment>
<comment type="similarity">
    <text evidence="3">Belongs to the asfivirus minor capsid protein p17 family.</text>
</comment>
<reference key="1">
    <citation type="journal article" date="1994" name="J. Gen. Virol.">
        <title>Nucleotide sequence of a 55 kbp region from the right end of the genome of a pathogenic African swine fever virus isolate (Malawi LIL20/1).</title>
        <authorList>
            <person name="Dixon L.K."/>
            <person name="Twigg S.R.F."/>
            <person name="Baylis S.A."/>
            <person name="Vydelingum S."/>
            <person name="Bristow C."/>
            <person name="Hammond J.M."/>
            <person name="Smith G.L."/>
        </authorList>
    </citation>
    <scope>NUCLEOTIDE SEQUENCE [GENOMIC DNA]</scope>
</reference>
<reference key="2">
    <citation type="submission" date="2003-03" db="EMBL/GenBank/DDBJ databases">
        <title>African swine fever virus genomes.</title>
        <authorList>
            <person name="Kutish G.F."/>
            <person name="Rock D.L."/>
        </authorList>
    </citation>
    <scope>NUCLEOTIDE SEQUENCE [LARGE SCALE GENOMIC DNA]</scope>
</reference>
<gene>
    <name type="ordered locus">Mal-115</name>
    <name type="ORF">i1L</name>
</gene>
<protein>
    <recommendedName>
        <fullName evidence="1">Minor capsid protein p17</fullName>
    </recommendedName>
</protein>
<keyword id="KW-0325">Glycoprotein</keyword>
<keyword id="KW-1038">Host endoplasmic reticulum</keyword>
<keyword id="KW-1043">Host membrane</keyword>
<keyword id="KW-0945">Host-virus interaction</keyword>
<keyword id="KW-1090">Inhibition of host innate immune response by virus</keyword>
<keyword id="KW-0472">Membrane</keyword>
<keyword id="KW-0812">Transmembrane</keyword>
<keyword id="KW-1133">Transmembrane helix</keyword>
<keyword id="KW-0899">Viral immunoevasion</keyword>
<keyword id="KW-0946">Virion</keyword>
<dbReference type="EMBL" id="X71982">
    <property type="protein sequence ID" value="CAA50814.1"/>
    <property type="molecule type" value="Genomic_DNA"/>
</dbReference>
<dbReference type="EMBL" id="AY261361">
    <property type="status" value="NOT_ANNOTATED_CDS"/>
    <property type="molecule type" value="Genomic_DNA"/>
</dbReference>
<dbReference type="SMR" id="Q65223"/>
<dbReference type="Proteomes" id="UP000000860">
    <property type="component" value="Segment"/>
</dbReference>
<dbReference type="GO" id="GO:0044167">
    <property type="term" value="C:host cell endoplasmic reticulum membrane"/>
    <property type="evidence" value="ECO:0007669"/>
    <property type="project" value="UniProtKB-SubCell"/>
</dbReference>
<dbReference type="GO" id="GO:0016020">
    <property type="term" value="C:membrane"/>
    <property type="evidence" value="ECO:0007669"/>
    <property type="project" value="UniProtKB-KW"/>
</dbReference>
<dbReference type="GO" id="GO:0055036">
    <property type="term" value="C:virion membrane"/>
    <property type="evidence" value="ECO:0007669"/>
    <property type="project" value="UniProtKB-SubCell"/>
</dbReference>
<dbReference type="GO" id="GO:0052170">
    <property type="term" value="P:symbiont-mediated suppression of host innate immune response"/>
    <property type="evidence" value="ECO:0007669"/>
    <property type="project" value="UniProtKB-KW"/>
</dbReference>
<organismHost>
    <name type="scientific">Ornithodoros</name>
    <name type="common">relapsing fever ticks</name>
    <dbReference type="NCBI Taxonomy" id="6937"/>
</organismHost>
<organismHost>
    <name type="scientific">Phacochoerus aethiopicus</name>
    <name type="common">Warthog</name>
    <dbReference type="NCBI Taxonomy" id="85517"/>
</organismHost>
<organismHost>
    <name type="scientific">Phacochoerus africanus</name>
    <name type="common">Warthog</name>
    <dbReference type="NCBI Taxonomy" id="41426"/>
</organismHost>
<organismHost>
    <name type="scientific">Potamochoerus larvatus</name>
    <name type="common">Bushpig</name>
    <dbReference type="NCBI Taxonomy" id="273792"/>
</organismHost>
<organismHost>
    <name type="scientific">Sus scrofa</name>
    <name type="common">Pig</name>
    <dbReference type="NCBI Taxonomy" id="9823"/>
</organismHost>
<proteinExistence type="inferred from homology"/>
<feature type="chain" id="PRO_0000373403" description="Minor capsid protein p17">
    <location>
        <begin position="1"/>
        <end position="117"/>
    </location>
</feature>
<feature type="transmembrane region" description="Helical" evidence="2">
    <location>
        <begin position="39"/>
        <end position="59"/>
    </location>
</feature>
<feature type="glycosylation site" description="N-linked (GlcNAc...) asparagine; by host" evidence="2">
    <location>
        <position position="12"/>
    </location>
</feature>
<feature type="glycosylation site" description="N-linked (GlcNAc...) asparagine; by host" evidence="2">
    <location>
        <position position="61"/>
    </location>
</feature>
<feature type="glycosylation site" description="N-linked (GlcNAc...) asparagine; by host" evidence="2">
    <location>
        <position position="97"/>
    </location>
</feature>
<sequence>MDTETSPLLSHNLSTREGIKQNTQGLLAHTIARHPGITAIILGILILLVIILIIVAIVYYNRSVDCKSNMPRPPPSYSIQQSEPHHHFPVFFRKRKNSTSQQAHIPSDEQLAELVHS</sequence>
<organism>
    <name type="scientific">African swine fever virus (isolate Tick/Malawi/Lil 20-1/1983)</name>
    <name type="common">ASFV</name>
    <dbReference type="NCBI Taxonomy" id="10500"/>
    <lineage>
        <taxon>Viruses</taxon>
        <taxon>Varidnaviria</taxon>
        <taxon>Bamfordvirae</taxon>
        <taxon>Nucleocytoviricota</taxon>
        <taxon>Pokkesviricetes</taxon>
        <taxon>Asfuvirales</taxon>
        <taxon>Asfarviridae</taxon>
        <taxon>Asfivirus</taxon>
        <taxon>African swine fever virus</taxon>
    </lineage>
</organism>